<protein>
    <recommendedName>
        <fullName evidence="1">Nucleoid-associated protein bll8115</fullName>
    </recommendedName>
</protein>
<evidence type="ECO:0000255" key="1">
    <source>
        <dbReference type="HAMAP-Rule" id="MF_00274"/>
    </source>
</evidence>
<name>YUD3_BRADU</name>
<dbReference type="EMBL" id="BA000040">
    <property type="protein sequence ID" value="BAC53380.1"/>
    <property type="molecule type" value="Genomic_DNA"/>
</dbReference>
<dbReference type="RefSeq" id="NP_774755.1">
    <property type="nucleotide sequence ID" value="NC_004463.1"/>
</dbReference>
<dbReference type="RefSeq" id="WP_011090837.1">
    <property type="nucleotide sequence ID" value="NC_004463.1"/>
</dbReference>
<dbReference type="SMR" id="Q89BN3"/>
<dbReference type="FunCoup" id="Q89BN3">
    <property type="interactions" value="510"/>
</dbReference>
<dbReference type="STRING" id="224911.AAV28_38270"/>
<dbReference type="EnsemblBacteria" id="BAC53380">
    <property type="protein sequence ID" value="BAC53380"/>
    <property type="gene ID" value="BAC53380"/>
</dbReference>
<dbReference type="GeneID" id="46495026"/>
<dbReference type="KEGG" id="bja:bll8115"/>
<dbReference type="PATRIC" id="fig|224911.44.peg.8285"/>
<dbReference type="eggNOG" id="COG0718">
    <property type="taxonomic scope" value="Bacteria"/>
</dbReference>
<dbReference type="HOGENOM" id="CLU_140930_0_1_5"/>
<dbReference type="InParanoid" id="Q89BN3"/>
<dbReference type="OrthoDB" id="9803080at2"/>
<dbReference type="PhylomeDB" id="Q89BN3"/>
<dbReference type="Proteomes" id="UP000002526">
    <property type="component" value="Chromosome"/>
</dbReference>
<dbReference type="GO" id="GO:0043590">
    <property type="term" value="C:bacterial nucleoid"/>
    <property type="evidence" value="ECO:0007669"/>
    <property type="project" value="UniProtKB-UniRule"/>
</dbReference>
<dbReference type="GO" id="GO:0005829">
    <property type="term" value="C:cytosol"/>
    <property type="evidence" value="ECO:0000318"/>
    <property type="project" value="GO_Central"/>
</dbReference>
<dbReference type="GO" id="GO:0003677">
    <property type="term" value="F:DNA binding"/>
    <property type="evidence" value="ECO:0000318"/>
    <property type="project" value="GO_Central"/>
</dbReference>
<dbReference type="FunFam" id="3.30.1310.10:FF:000013">
    <property type="entry name" value="Nucleoid-associated protein CO678_37690"/>
    <property type="match status" value="1"/>
</dbReference>
<dbReference type="Gene3D" id="3.30.1310.10">
    <property type="entry name" value="Nucleoid-associated protein YbaB-like domain"/>
    <property type="match status" value="1"/>
</dbReference>
<dbReference type="HAMAP" id="MF_00274">
    <property type="entry name" value="DNA_YbaB_EbfC"/>
    <property type="match status" value="1"/>
</dbReference>
<dbReference type="InterPro" id="IPR036894">
    <property type="entry name" value="YbaB-like_sf"/>
</dbReference>
<dbReference type="InterPro" id="IPR004401">
    <property type="entry name" value="YbaB/EbfC"/>
</dbReference>
<dbReference type="NCBIfam" id="TIGR00103">
    <property type="entry name" value="DNA_YbaB_EbfC"/>
    <property type="match status" value="1"/>
</dbReference>
<dbReference type="PANTHER" id="PTHR33449">
    <property type="entry name" value="NUCLEOID-ASSOCIATED PROTEIN YBAB"/>
    <property type="match status" value="1"/>
</dbReference>
<dbReference type="PANTHER" id="PTHR33449:SF1">
    <property type="entry name" value="NUCLEOID-ASSOCIATED PROTEIN YBAB"/>
    <property type="match status" value="1"/>
</dbReference>
<dbReference type="Pfam" id="PF02575">
    <property type="entry name" value="YbaB_DNA_bd"/>
    <property type="match status" value="1"/>
</dbReference>
<dbReference type="PIRSF" id="PIRSF004555">
    <property type="entry name" value="UCP004555"/>
    <property type="match status" value="1"/>
</dbReference>
<dbReference type="SUPFAM" id="SSF82607">
    <property type="entry name" value="YbaB-like"/>
    <property type="match status" value="1"/>
</dbReference>
<reference key="1">
    <citation type="journal article" date="2002" name="DNA Res.">
        <title>Complete genomic sequence of nitrogen-fixing symbiotic bacterium Bradyrhizobium japonicum USDA110.</title>
        <authorList>
            <person name="Kaneko T."/>
            <person name="Nakamura Y."/>
            <person name="Sato S."/>
            <person name="Minamisawa K."/>
            <person name="Uchiumi T."/>
            <person name="Sasamoto S."/>
            <person name="Watanabe A."/>
            <person name="Idesawa K."/>
            <person name="Iriguchi M."/>
            <person name="Kawashima K."/>
            <person name="Kohara M."/>
            <person name="Matsumoto M."/>
            <person name="Shimpo S."/>
            <person name="Tsuruoka H."/>
            <person name="Wada T."/>
            <person name="Yamada M."/>
            <person name="Tabata S."/>
        </authorList>
    </citation>
    <scope>NUCLEOTIDE SEQUENCE [LARGE SCALE GENOMIC DNA]</scope>
    <source>
        <strain>JCM 10833 / BCRC 13528 / IAM 13628 / NBRC 14792 / USDA 110</strain>
    </source>
</reference>
<feature type="chain" id="PRO_0000170370" description="Nucleoid-associated protein bll8115">
    <location>
        <begin position="1"/>
        <end position="106"/>
    </location>
</feature>
<comment type="function">
    <text evidence="1">Binds to DNA and alters its conformation. May be involved in regulation of gene expression, nucleoid organization and DNA protection.</text>
</comment>
<comment type="subunit">
    <text evidence="1">Homodimer.</text>
</comment>
<comment type="subcellular location">
    <subcellularLocation>
        <location evidence="1">Cytoplasm</location>
        <location evidence="1">Nucleoid</location>
    </subcellularLocation>
</comment>
<comment type="similarity">
    <text evidence="1">Belongs to the YbaB/EbfC family.</text>
</comment>
<accession>Q89BN3</accession>
<proteinExistence type="inferred from homology"/>
<sequence length="106" mass="11290">MADFLGMMKQAAQLQSKMQEMQDALGNVEVEGISGGGLVVVRMTAKMDVKGVKIDPSLMKAEEREVLEDLLVTALGDARRKAEAAVQEKMQSLTGGLGLPPGLFGQ</sequence>
<keyword id="KW-0963">Cytoplasm</keyword>
<keyword id="KW-0238">DNA-binding</keyword>
<keyword id="KW-1185">Reference proteome</keyword>
<gene>
    <name type="ordered locus">bll8115</name>
</gene>
<organism>
    <name type="scientific">Bradyrhizobium diazoefficiens (strain JCM 10833 / BCRC 13528 / IAM 13628 / NBRC 14792 / USDA 110)</name>
    <dbReference type="NCBI Taxonomy" id="224911"/>
    <lineage>
        <taxon>Bacteria</taxon>
        <taxon>Pseudomonadati</taxon>
        <taxon>Pseudomonadota</taxon>
        <taxon>Alphaproteobacteria</taxon>
        <taxon>Hyphomicrobiales</taxon>
        <taxon>Nitrobacteraceae</taxon>
        <taxon>Bradyrhizobium</taxon>
    </lineage>
</organism>